<name>RLMH_BARBK</name>
<protein>
    <recommendedName>
        <fullName evidence="1">Ribosomal RNA large subunit methyltransferase H</fullName>
        <ecNumber evidence="1">2.1.1.177</ecNumber>
    </recommendedName>
    <alternativeName>
        <fullName evidence="1">23S rRNA (pseudouridine1915-N3)-methyltransferase</fullName>
    </alternativeName>
    <alternativeName>
        <fullName evidence="1">23S rRNA m3Psi1915 methyltransferase</fullName>
    </alternativeName>
    <alternativeName>
        <fullName evidence="1">rRNA (pseudouridine-N3-)-methyltransferase RlmH</fullName>
    </alternativeName>
</protein>
<reference key="1">
    <citation type="submission" date="2006-12" db="EMBL/GenBank/DDBJ databases">
        <authorList>
            <person name="Hendrix L."/>
            <person name="Mohamoud Y."/>
            <person name="Radune D."/>
            <person name="Shvartsbeyn A."/>
            <person name="Daugherty S."/>
            <person name="Dodson R."/>
            <person name="Durkin A.S."/>
            <person name="Harkins D."/>
            <person name="Huot H."/>
            <person name="Kothari S.P."/>
            <person name="Madupu R."/>
            <person name="Li J."/>
            <person name="Nelson W.C."/>
            <person name="Shrivastava S."/>
            <person name="Giglio M.G."/>
            <person name="Haft D."/>
            <person name="Selengut J."/>
            <person name="Fraser-Ligget C."/>
            <person name="Seshadri R."/>
        </authorList>
    </citation>
    <scope>NUCLEOTIDE SEQUENCE [LARGE SCALE GENOMIC DNA]</scope>
    <source>
        <strain>ATCC 35685 / KC583 / Herrer 020/F12,63</strain>
    </source>
</reference>
<dbReference type="EC" id="2.1.1.177" evidence="1"/>
<dbReference type="EMBL" id="CP000524">
    <property type="protein sequence ID" value="ABM44447.1"/>
    <property type="molecule type" value="Genomic_DNA"/>
</dbReference>
<dbReference type="RefSeq" id="WP_005766240.1">
    <property type="nucleotide sequence ID" value="NC_008783.1"/>
</dbReference>
<dbReference type="SMR" id="A1URN9"/>
<dbReference type="STRING" id="360095.BARBAKC583_0322"/>
<dbReference type="GeneID" id="4684499"/>
<dbReference type="KEGG" id="bbk:BARBAKC583_0322"/>
<dbReference type="PATRIC" id="fig|360095.6.peg.306"/>
<dbReference type="eggNOG" id="COG1576">
    <property type="taxonomic scope" value="Bacteria"/>
</dbReference>
<dbReference type="HOGENOM" id="CLU_100552_1_1_5"/>
<dbReference type="OrthoDB" id="9806643at2"/>
<dbReference type="Proteomes" id="UP000000643">
    <property type="component" value="Chromosome"/>
</dbReference>
<dbReference type="GO" id="GO:0005737">
    <property type="term" value="C:cytoplasm"/>
    <property type="evidence" value="ECO:0007669"/>
    <property type="project" value="UniProtKB-SubCell"/>
</dbReference>
<dbReference type="GO" id="GO:0070038">
    <property type="term" value="F:rRNA (pseudouridine-N3-)-methyltransferase activity"/>
    <property type="evidence" value="ECO:0007669"/>
    <property type="project" value="UniProtKB-UniRule"/>
</dbReference>
<dbReference type="CDD" id="cd18081">
    <property type="entry name" value="RlmH-like"/>
    <property type="match status" value="1"/>
</dbReference>
<dbReference type="Gene3D" id="3.40.1280.10">
    <property type="match status" value="1"/>
</dbReference>
<dbReference type="HAMAP" id="MF_00658">
    <property type="entry name" value="23SrRNA_methyltr_H"/>
    <property type="match status" value="1"/>
</dbReference>
<dbReference type="InterPro" id="IPR029028">
    <property type="entry name" value="Alpha/beta_knot_MTases"/>
</dbReference>
<dbReference type="InterPro" id="IPR003742">
    <property type="entry name" value="RlmH-like"/>
</dbReference>
<dbReference type="InterPro" id="IPR029026">
    <property type="entry name" value="tRNA_m1G_MTases_N"/>
</dbReference>
<dbReference type="NCBIfam" id="NF000989">
    <property type="entry name" value="PRK00103.2-3"/>
    <property type="match status" value="1"/>
</dbReference>
<dbReference type="PANTHER" id="PTHR33603">
    <property type="entry name" value="METHYLTRANSFERASE"/>
    <property type="match status" value="1"/>
</dbReference>
<dbReference type="PANTHER" id="PTHR33603:SF1">
    <property type="entry name" value="RIBOSOMAL RNA LARGE SUBUNIT METHYLTRANSFERASE H"/>
    <property type="match status" value="1"/>
</dbReference>
<dbReference type="Pfam" id="PF02590">
    <property type="entry name" value="SPOUT_MTase"/>
    <property type="match status" value="1"/>
</dbReference>
<dbReference type="PIRSF" id="PIRSF004505">
    <property type="entry name" value="MT_bac"/>
    <property type="match status" value="1"/>
</dbReference>
<dbReference type="SUPFAM" id="SSF75217">
    <property type="entry name" value="alpha/beta knot"/>
    <property type="match status" value="1"/>
</dbReference>
<sequence>MQISIFAVGRMKVGAEQELVHRYLDRFSKSAGAVGLHFRKMQEVSESRAQTACQRMEEEGKRLFEALPEPSRLIVCDERGKSVSSIAFAEKLAFYRDEGVRDLVIALGGPDGHSEQVRDRADFLLSFGLMTWPHQIARILLTEQLYRTVTIANNHPYHRF</sequence>
<proteinExistence type="inferred from homology"/>
<evidence type="ECO:0000255" key="1">
    <source>
        <dbReference type="HAMAP-Rule" id="MF_00658"/>
    </source>
</evidence>
<keyword id="KW-0963">Cytoplasm</keyword>
<keyword id="KW-0489">Methyltransferase</keyword>
<keyword id="KW-0698">rRNA processing</keyword>
<keyword id="KW-0949">S-adenosyl-L-methionine</keyword>
<keyword id="KW-0808">Transferase</keyword>
<comment type="function">
    <text evidence="1">Specifically methylates the pseudouridine at position 1915 (m3Psi1915) in 23S rRNA.</text>
</comment>
<comment type="catalytic activity">
    <reaction evidence="1">
        <text>pseudouridine(1915) in 23S rRNA + S-adenosyl-L-methionine = N(3)-methylpseudouridine(1915) in 23S rRNA + S-adenosyl-L-homocysteine + H(+)</text>
        <dbReference type="Rhea" id="RHEA:42752"/>
        <dbReference type="Rhea" id="RHEA-COMP:10221"/>
        <dbReference type="Rhea" id="RHEA-COMP:10222"/>
        <dbReference type="ChEBI" id="CHEBI:15378"/>
        <dbReference type="ChEBI" id="CHEBI:57856"/>
        <dbReference type="ChEBI" id="CHEBI:59789"/>
        <dbReference type="ChEBI" id="CHEBI:65314"/>
        <dbReference type="ChEBI" id="CHEBI:74486"/>
        <dbReference type="EC" id="2.1.1.177"/>
    </reaction>
</comment>
<comment type="subunit">
    <text evidence="1">Homodimer.</text>
</comment>
<comment type="subcellular location">
    <subcellularLocation>
        <location evidence="1">Cytoplasm</location>
    </subcellularLocation>
</comment>
<comment type="similarity">
    <text evidence="1">Belongs to the RNA methyltransferase RlmH family.</text>
</comment>
<accession>A1URN9</accession>
<feature type="chain" id="PRO_1000061759" description="Ribosomal RNA large subunit methyltransferase H">
    <location>
        <begin position="1"/>
        <end position="160"/>
    </location>
</feature>
<feature type="binding site" evidence="1">
    <location>
        <position position="108"/>
    </location>
    <ligand>
        <name>S-adenosyl-L-methionine</name>
        <dbReference type="ChEBI" id="CHEBI:59789"/>
    </ligand>
</feature>
<feature type="binding site" evidence="1">
    <location>
        <begin position="127"/>
        <end position="132"/>
    </location>
    <ligand>
        <name>S-adenosyl-L-methionine</name>
        <dbReference type="ChEBI" id="CHEBI:59789"/>
    </ligand>
</feature>
<gene>
    <name evidence="1" type="primary">rlmH</name>
    <name type="ordered locus">BARBAKC583_0322</name>
</gene>
<organism>
    <name type="scientific">Bartonella bacilliformis (strain ATCC 35685 / KC583 / Herrer 020/F12,63)</name>
    <dbReference type="NCBI Taxonomy" id="360095"/>
    <lineage>
        <taxon>Bacteria</taxon>
        <taxon>Pseudomonadati</taxon>
        <taxon>Pseudomonadota</taxon>
        <taxon>Alphaproteobacteria</taxon>
        <taxon>Hyphomicrobiales</taxon>
        <taxon>Bartonellaceae</taxon>
        <taxon>Bartonella</taxon>
    </lineage>
</organism>